<comment type="similarity">
    <text evidence="1">Belongs to the UPF0502 family.</text>
</comment>
<reference key="1">
    <citation type="journal article" date="2007" name="PLoS Genet.">
        <title>A tale of two oxidation states: bacterial colonization of arsenic-rich environments.</title>
        <authorList>
            <person name="Muller D."/>
            <person name="Medigue C."/>
            <person name="Koechler S."/>
            <person name="Barbe V."/>
            <person name="Barakat M."/>
            <person name="Talla E."/>
            <person name="Bonnefoy V."/>
            <person name="Krin E."/>
            <person name="Arsene-Ploetze F."/>
            <person name="Carapito C."/>
            <person name="Chandler M."/>
            <person name="Cournoyer B."/>
            <person name="Cruveiller S."/>
            <person name="Dossat C."/>
            <person name="Duval S."/>
            <person name="Heymann M."/>
            <person name="Leize E."/>
            <person name="Lieutaud A."/>
            <person name="Lievremont D."/>
            <person name="Makita Y."/>
            <person name="Mangenot S."/>
            <person name="Nitschke W."/>
            <person name="Ortet P."/>
            <person name="Perdrial N."/>
            <person name="Schoepp B."/>
            <person name="Siguier P."/>
            <person name="Simeonova D.D."/>
            <person name="Rouy Z."/>
            <person name="Segurens B."/>
            <person name="Turlin E."/>
            <person name="Vallenet D."/>
            <person name="van Dorsselaer A."/>
            <person name="Weiss S."/>
            <person name="Weissenbach J."/>
            <person name="Lett M.-C."/>
            <person name="Danchin A."/>
            <person name="Bertin P.N."/>
        </authorList>
    </citation>
    <scope>NUCLEOTIDE SEQUENCE [LARGE SCALE GENOMIC DNA]</scope>
    <source>
        <strain>ULPAs1</strain>
    </source>
</reference>
<accession>A4G4L7</accession>
<protein>
    <recommendedName>
        <fullName evidence="1">UPF0502 protein HEAR1280</fullName>
    </recommendedName>
</protein>
<proteinExistence type="inferred from homology"/>
<evidence type="ECO:0000255" key="1">
    <source>
        <dbReference type="HAMAP-Rule" id="MF_01584"/>
    </source>
</evidence>
<evidence type="ECO:0000256" key="2">
    <source>
        <dbReference type="SAM" id="MobiDB-lite"/>
    </source>
</evidence>
<gene>
    <name type="ordered locus">HEAR1280</name>
</gene>
<organism>
    <name type="scientific">Herminiimonas arsenicoxydans</name>
    <dbReference type="NCBI Taxonomy" id="204773"/>
    <lineage>
        <taxon>Bacteria</taxon>
        <taxon>Pseudomonadati</taxon>
        <taxon>Pseudomonadota</taxon>
        <taxon>Betaproteobacteria</taxon>
        <taxon>Burkholderiales</taxon>
        <taxon>Oxalobacteraceae</taxon>
        <taxon>Herminiimonas</taxon>
    </lineage>
</organism>
<dbReference type="EMBL" id="CU207211">
    <property type="protein sequence ID" value="CAL61454.1"/>
    <property type="molecule type" value="Genomic_DNA"/>
</dbReference>
<dbReference type="SMR" id="A4G4L7"/>
<dbReference type="STRING" id="204773.HEAR1280"/>
<dbReference type="KEGG" id="har:HEAR1280"/>
<dbReference type="eggNOG" id="COG3132">
    <property type="taxonomic scope" value="Bacteria"/>
</dbReference>
<dbReference type="HOGENOM" id="CLU_057831_1_0_4"/>
<dbReference type="OrthoDB" id="9784785at2"/>
<dbReference type="Proteomes" id="UP000006697">
    <property type="component" value="Chromosome"/>
</dbReference>
<dbReference type="Gene3D" id="1.10.10.10">
    <property type="entry name" value="Winged helix-like DNA-binding domain superfamily/Winged helix DNA-binding domain"/>
    <property type="match status" value="2"/>
</dbReference>
<dbReference type="HAMAP" id="MF_01584">
    <property type="entry name" value="UPF0502"/>
    <property type="match status" value="1"/>
</dbReference>
<dbReference type="InterPro" id="IPR007432">
    <property type="entry name" value="DUF480"/>
</dbReference>
<dbReference type="InterPro" id="IPR036388">
    <property type="entry name" value="WH-like_DNA-bd_sf"/>
</dbReference>
<dbReference type="InterPro" id="IPR036390">
    <property type="entry name" value="WH_DNA-bd_sf"/>
</dbReference>
<dbReference type="PANTHER" id="PTHR38768">
    <property type="entry name" value="UPF0502 PROTEIN YCEH"/>
    <property type="match status" value="1"/>
</dbReference>
<dbReference type="PANTHER" id="PTHR38768:SF1">
    <property type="entry name" value="UPF0502 PROTEIN YCEH"/>
    <property type="match status" value="1"/>
</dbReference>
<dbReference type="Pfam" id="PF04337">
    <property type="entry name" value="DUF480"/>
    <property type="match status" value="1"/>
</dbReference>
<dbReference type="SUPFAM" id="SSF46785">
    <property type="entry name" value="Winged helix' DNA-binding domain"/>
    <property type="match status" value="2"/>
</dbReference>
<keyword id="KW-1185">Reference proteome</keyword>
<sequence>MNTEVMHSTSTESDAQEKPQAMFDTSAMRVLAVLAEKEALTPDSYPMSLNALTNGCNQLTSRDPVMAMGEDEVREILQHLIQEKFIAEVNQAGARVSKYEHRLRMKWSLEQDKLAVLTILMLRGIQTAGEIRNRSGRLHEFASIADVEAGLQFLMDKYPPLVVRLPRAPGTKEARYASLLCGESYPETAEGAAYAASAAAGVSRQDRIAQLEGEVGALREEVAALAAQLQQFRQQFE</sequence>
<name>Y1280_HERAR</name>
<feature type="chain" id="PRO_0000309393" description="UPF0502 protein HEAR1280">
    <location>
        <begin position="1"/>
        <end position="237"/>
    </location>
</feature>
<feature type="region of interest" description="Disordered" evidence="2">
    <location>
        <begin position="1"/>
        <end position="21"/>
    </location>
</feature>
<feature type="compositionally biased region" description="Polar residues" evidence="2">
    <location>
        <begin position="1"/>
        <end position="13"/>
    </location>
</feature>